<feature type="initiator methionine" description="Removed" evidence="4">
    <location>
        <position position="1"/>
    </location>
</feature>
<feature type="chain" id="PRO_0000260365" description="Caveolin-1">
    <location>
        <begin position="2"/>
        <end position="178"/>
    </location>
</feature>
<feature type="topological domain" description="Cytoplasmic" evidence="6">
    <location>
        <begin position="2"/>
        <end position="104"/>
    </location>
</feature>
<feature type="intramembrane region" description="Helical" evidence="6">
    <location>
        <begin position="105"/>
        <end position="125"/>
    </location>
</feature>
<feature type="topological domain" description="Cytoplasmic" evidence="6">
    <location>
        <begin position="126"/>
        <end position="178"/>
    </location>
</feature>
<feature type="region of interest" description="Required for homooligomerization" evidence="4">
    <location>
        <begin position="2"/>
        <end position="94"/>
    </location>
</feature>
<feature type="region of interest" description="Interaction with CAVIN3" evidence="4">
    <location>
        <begin position="82"/>
        <end position="94"/>
    </location>
</feature>
<feature type="region of interest" description="Interacts with SPRY1, SPRY2, SPRY3 and SPRY4" evidence="3">
    <location>
        <begin position="131"/>
        <end position="142"/>
    </location>
</feature>
<feature type="region of interest" description="Interacts with SPRY1, SPRY2, and SPRY4" evidence="3">
    <location>
        <begin position="149"/>
        <end position="160"/>
    </location>
</feature>
<feature type="region of interest" description="Interacts with SPRY1, SPRY2, SPRY3 and SPRY4" evidence="3">
    <location>
        <begin position="167"/>
        <end position="178"/>
    </location>
</feature>
<feature type="modified residue" description="N-acetylserine" evidence="4">
    <location>
        <position position="2"/>
    </location>
</feature>
<feature type="modified residue" description="Phosphoserine" evidence="2">
    <location>
        <position position="2"/>
    </location>
</feature>
<feature type="modified residue" description="N6-acetyllysine; alternate" evidence="4">
    <location>
        <position position="5"/>
    </location>
</feature>
<feature type="modified residue" description="Phosphotyrosine" evidence="4">
    <location>
        <position position="6"/>
    </location>
</feature>
<feature type="modified residue" description="Phosphoserine" evidence="3">
    <location>
        <position position="9"/>
    </location>
</feature>
<feature type="modified residue" description="Phosphotyrosine; by ABL1" evidence="3">
    <location>
        <position position="14"/>
    </location>
</feature>
<feature type="modified residue" description="Phosphotyrosine" evidence="4">
    <location>
        <position position="25"/>
    </location>
</feature>
<feature type="modified residue" description="Phosphoserine" evidence="4">
    <location>
        <position position="37"/>
    </location>
</feature>
<feature type="lipid moiety-binding region" description="S-palmitoyl cysteine" evidence="1">
    <location>
        <position position="133"/>
    </location>
</feature>
<feature type="lipid moiety-binding region" description="S-palmitoyl cysteine" evidence="1">
    <location>
        <position position="143"/>
    </location>
</feature>
<feature type="lipid moiety-binding region" description="S-palmitoyl cysteine" evidence="1">
    <location>
        <position position="156"/>
    </location>
</feature>
<feature type="cross-link" description="Glycyl lysine isopeptide (Lys-Gly) (interchain with G-Cter in ubiquitin); alternate" evidence="4">
    <location>
        <position position="5"/>
    </location>
</feature>
<feature type="cross-link" description="Glycyl lysine isopeptide (Lys-Gly) (interchain with G-Cter in ubiquitin)" evidence="4">
    <location>
        <position position="26"/>
    </location>
</feature>
<feature type="cross-link" description="Glycyl lysine isopeptide (Lys-Gly) (interchain with G-Cter in ubiquitin)" evidence="4">
    <location>
        <position position="30"/>
    </location>
</feature>
<feature type="cross-link" description="Glycyl lysine isopeptide (Lys-Gly) (interchain with G-Cter in ubiquitin)" evidence="4">
    <location>
        <position position="39"/>
    </location>
</feature>
<feature type="cross-link" description="Glycyl lysine isopeptide (Lys-Gly) (interchain with G-Cter in ubiquitin)" evidence="4">
    <location>
        <position position="47"/>
    </location>
</feature>
<feature type="cross-link" description="Glycyl lysine isopeptide (Lys-Gly) (interchain with G-Cter in ubiquitin)" evidence="4">
    <location>
        <position position="57"/>
    </location>
</feature>
<protein>
    <recommendedName>
        <fullName>Caveolin-1</fullName>
    </recommendedName>
</protein>
<keyword id="KW-0007">Acetylation</keyword>
<keyword id="KW-1003">Cell membrane</keyword>
<keyword id="KW-0333">Golgi apparatus</keyword>
<keyword id="KW-1017">Isopeptide bond</keyword>
<keyword id="KW-0449">Lipoprotein</keyword>
<keyword id="KW-0472">Membrane</keyword>
<keyword id="KW-0564">Palmitate</keyword>
<keyword id="KW-0597">Phosphoprotein</keyword>
<keyword id="KW-0832">Ubl conjugation</keyword>
<proteinExistence type="inferred from homology"/>
<organism>
    <name type="scientific">Colobus guereza</name>
    <name type="common">Mantled guereza</name>
    <name type="synonym">Eastern black-and-white colobus monkey</name>
    <dbReference type="NCBI Taxonomy" id="33548"/>
    <lineage>
        <taxon>Eukaryota</taxon>
        <taxon>Metazoa</taxon>
        <taxon>Chordata</taxon>
        <taxon>Craniata</taxon>
        <taxon>Vertebrata</taxon>
        <taxon>Euteleostomi</taxon>
        <taxon>Mammalia</taxon>
        <taxon>Eutheria</taxon>
        <taxon>Euarchontoglires</taxon>
        <taxon>Primates</taxon>
        <taxon>Haplorrhini</taxon>
        <taxon>Catarrhini</taxon>
        <taxon>Cercopithecidae</taxon>
        <taxon>Colobinae</taxon>
        <taxon>Colobus</taxon>
    </lineage>
</organism>
<accession>Q07DZ2</accession>
<sequence length="178" mass="20472">MSGGKYVDSEGHLYTVPIREQGNIYKPNNKAMADELSEKQVYDAHTKEIDLVNRDPKHLNDDVVKIDFEDVIAEPEGTHSFDGIWKASFTTFTVTKYWFYRLLSALFGIPMALIWGIYFAILSFLHIWAVVPCIKSFLIEIQCISRVYSIYVHTVCDPLFEAVGKIFSNVRINLQKEI</sequence>
<comment type="function">
    <text evidence="3 4">May act as a scaffolding protein within caveolar membranes. Forms a stable heterooligomeric complex with CAV2 that targets to lipid rafts and drives caveolae formation. Mediates the recruitment of CAVIN proteins (CAVIN1/2/3/4) to the caveolae (By similarity). Interacts directly with G-protein alpha subunits and can functionally regulate their activity (By similarity). Involved in the costimulatory signal essential for T-cell receptor (TCR)-mediated T-cell activation. Its binding to DPP4 induces T-cell proliferation and NF-kappa-B activation in a T-cell receptor/CD3-dependent manner (By similarity). Recruits CTNNB1 to caveolar membranes and may regulate CTNNB1-mediated signaling through the Wnt pathway (By similarity). Negatively regulates TGFB1-mediated activation of SMAD2/3 by mediating the internalization of TGFBR1 from membrane rafts leading to its subsequent degradation (By similarity). Binds 20(S)-hydroxycholesterol (20(S)-OHC) (By similarity).</text>
</comment>
<comment type="subunit">
    <text evidence="2 3 4 5">Homooligomer. Interacts with GLIPR2. Interacts with NOSTRIN (By similarity). Interacts with SNAP25 and STX1A (By similarity). Interacts (via the N-terminus) with DPP4; the interaction is direct (By similarity). Interacts with CTNNB1, CDH1 and JUP. Interacts with PACSIN2; this interaction induces membrane tubulation (By similarity). Interacts with SLC7A9 (By similarity). Interacts with BMX and BTK. Interacts with TGFBR1. Interacts with CAVIN3 (via leucine-zipper domain) in a cholesterol-sensitive manner. Interacts with CAVIN1. Interacts with EHD2 in a cholesterol-dependent manner. Forms a ternary complex with UBXN6 and VCP; mediates CAV1 targeting to lysosomes for degradation. Interacts with ABCG1; this interaction regulates ABCG1-mediated cholesterol efflux (By similarity). Interacts with NEU3; this interaction enhances NEU3 sialidase activity within caveola. Interacts (via C-terminus) with SPRY1, SPRY2 (via C-terminus), SPRY3, and SPRY4 (By similarity). Interacts with IGFBP5; this interaction allows trafficking of IGFBP5 from the plasma membrane to the nucleus (By similarity).</text>
</comment>
<comment type="subcellular location">
    <subcellularLocation>
        <location evidence="1">Golgi apparatus membrane</location>
        <topology evidence="1">Peripheral membrane protein</topology>
    </subcellularLocation>
    <subcellularLocation>
        <location evidence="1">Cell membrane</location>
        <topology evidence="1">Peripheral membrane protein</topology>
    </subcellularLocation>
    <subcellularLocation>
        <location evidence="3">Membrane</location>
        <location evidence="3">Caveola</location>
        <topology evidence="1">Peripheral membrane protein</topology>
    </subcellularLocation>
    <subcellularLocation>
        <location evidence="4">Membrane raft</location>
    </subcellularLocation>
    <text evidence="1">Colocalized with DPP4 in membrane rafts. Potential hairpin-like structure in the membrane. Membrane protein of caveolae (By similarity).</text>
</comment>
<comment type="PTM">
    <text evidence="4">Phosphorylated at Tyr-14 by ABL1 in response to oxidative stress.</text>
</comment>
<comment type="PTM">
    <text evidence="4">Ubiquitinated. Undergo monoubiquitination and multi- and/or polyubiquitination. Monoubiquitination of N-terminal lysines promotes integration in a ternary complex with UBXN6 and VCP which promotes oligomeric CAV1 targeting to lysosomes for degradation. Ubiquitinated by ZNRF1; leading to degradation and modulation of the TLR4-mediated immune response.</text>
</comment>
<comment type="similarity">
    <text evidence="7">Belongs to the caveolin family.</text>
</comment>
<reference key="1">
    <citation type="submission" date="2006-09" db="EMBL/GenBank/DDBJ databases">
        <title>NISC comparative sequencing initiative.</title>
        <authorList>
            <person name="Antonellis A."/>
            <person name="Ayele K."/>
            <person name="Benjamin B."/>
            <person name="Blakesley R.W."/>
            <person name="Boakye A."/>
            <person name="Bouffard G.G."/>
            <person name="Brinkley C."/>
            <person name="Brooks S."/>
            <person name="Chu G."/>
            <person name="Coleman H."/>
            <person name="Engle J."/>
            <person name="Gestole M."/>
            <person name="Greene A."/>
            <person name="Guan X."/>
            <person name="Gupta J."/>
            <person name="Haghighi P."/>
            <person name="Han J."/>
            <person name="Hansen N."/>
            <person name="Ho S.-L."/>
            <person name="Hu P."/>
            <person name="Hunter G."/>
            <person name="Hurle B."/>
            <person name="Idol J.R."/>
            <person name="Kwong P."/>
            <person name="Laric P."/>
            <person name="Larson S."/>
            <person name="Lee-Lin S.-Q."/>
            <person name="Legaspi R."/>
            <person name="Madden M."/>
            <person name="Maduro Q.L."/>
            <person name="Maduro V.B."/>
            <person name="Margulies E.H."/>
            <person name="Masiello C."/>
            <person name="Maskeri B."/>
            <person name="McDowell J."/>
            <person name="Mojidi H.A."/>
            <person name="Mullikin J.C."/>
            <person name="Oestreicher J.S."/>
            <person name="Park M."/>
            <person name="Portnoy M.E."/>
            <person name="Prasad A."/>
            <person name="Puri O."/>
            <person name="Reddix-Dugue N."/>
            <person name="Schandler K."/>
            <person name="Schueler M.G."/>
            <person name="Sison C."/>
            <person name="Stantripop S."/>
            <person name="Stephen E."/>
            <person name="Taye A."/>
            <person name="Thomas J.W."/>
            <person name="Thomas P.J."/>
            <person name="Tsipouri V."/>
            <person name="Ung L."/>
            <person name="Vogt J.L."/>
            <person name="Wetherby K.D."/>
            <person name="Young A."/>
            <person name="Green E.D."/>
        </authorList>
    </citation>
    <scope>NUCLEOTIDE SEQUENCE [LARGE SCALE GENOMIC DNA]</scope>
</reference>
<name>CAV1_COLGU</name>
<dbReference type="EMBL" id="DP000193">
    <property type="protein sequence ID" value="ABJ08850.1"/>
    <property type="molecule type" value="Genomic_DNA"/>
</dbReference>
<dbReference type="SMR" id="Q07DZ2"/>
<dbReference type="GO" id="GO:0005901">
    <property type="term" value="C:caveola"/>
    <property type="evidence" value="ECO:0000250"/>
    <property type="project" value="UniProtKB"/>
</dbReference>
<dbReference type="GO" id="GO:0005768">
    <property type="term" value="C:endosome"/>
    <property type="evidence" value="ECO:0000250"/>
    <property type="project" value="UniProtKB"/>
</dbReference>
<dbReference type="GO" id="GO:0005925">
    <property type="term" value="C:focal adhesion"/>
    <property type="evidence" value="ECO:0007669"/>
    <property type="project" value="TreeGrafter"/>
</dbReference>
<dbReference type="GO" id="GO:0000139">
    <property type="term" value="C:Golgi membrane"/>
    <property type="evidence" value="ECO:0007669"/>
    <property type="project" value="UniProtKB-SubCell"/>
</dbReference>
<dbReference type="GO" id="GO:0045121">
    <property type="term" value="C:membrane raft"/>
    <property type="evidence" value="ECO:0000250"/>
    <property type="project" value="UniProtKB"/>
</dbReference>
<dbReference type="GO" id="GO:0048471">
    <property type="term" value="C:perinuclear region of cytoplasm"/>
    <property type="evidence" value="ECO:0007669"/>
    <property type="project" value="TreeGrafter"/>
</dbReference>
<dbReference type="GO" id="GO:0042383">
    <property type="term" value="C:sarcolemma"/>
    <property type="evidence" value="ECO:0007669"/>
    <property type="project" value="TreeGrafter"/>
</dbReference>
<dbReference type="GO" id="GO:0060090">
    <property type="term" value="F:molecular adaptor activity"/>
    <property type="evidence" value="ECO:0007669"/>
    <property type="project" value="TreeGrafter"/>
</dbReference>
<dbReference type="GO" id="GO:0008142">
    <property type="term" value="F:oxysterol binding"/>
    <property type="evidence" value="ECO:0000250"/>
    <property type="project" value="UniProtKB"/>
</dbReference>
<dbReference type="GO" id="GO:0019901">
    <property type="term" value="F:protein kinase binding"/>
    <property type="evidence" value="ECO:0007669"/>
    <property type="project" value="TreeGrafter"/>
</dbReference>
<dbReference type="GO" id="GO:0044325">
    <property type="term" value="F:transmembrane transporter binding"/>
    <property type="evidence" value="ECO:0007669"/>
    <property type="project" value="TreeGrafter"/>
</dbReference>
<dbReference type="GO" id="GO:0070836">
    <property type="term" value="P:caveola assembly"/>
    <property type="evidence" value="ECO:0007669"/>
    <property type="project" value="InterPro"/>
</dbReference>
<dbReference type="GO" id="GO:0030154">
    <property type="term" value="P:cell differentiation"/>
    <property type="evidence" value="ECO:0007669"/>
    <property type="project" value="TreeGrafter"/>
</dbReference>
<dbReference type="GO" id="GO:0001937">
    <property type="term" value="P:negative regulation of endothelial cell proliferation"/>
    <property type="evidence" value="ECO:0007669"/>
    <property type="project" value="TreeGrafter"/>
</dbReference>
<dbReference type="GO" id="GO:0031623">
    <property type="term" value="P:receptor internalization"/>
    <property type="evidence" value="ECO:0000250"/>
    <property type="project" value="UniProtKB"/>
</dbReference>
<dbReference type="GO" id="GO:0051480">
    <property type="term" value="P:regulation of cytosolic calcium ion concentration"/>
    <property type="evidence" value="ECO:0007669"/>
    <property type="project" value="TreeGrafter"/>
</dbReference>
<dbReference type="GO" id="GO:0031295">
    <property type="term" value="P:T cell costimulation"/>
    <property type="evidence" value="ECO:0000250"/>
    <property type="project" value="UniProtKB"/>
</dbReference>
<dbReference type="InterPro" id="IPR001612">
    <property type="entry name" value="Caveolin"/>
</dbReference>
<dbReference type="InterPro" id="IPR018361">
    <property type="entry name" value="Caveolin_CS"/>
</dbReference>
<dbReference type="PANTHER" id="PTHR10844">
    <property type="entry name" value="CAVEOLIN"/>
    <property type="match status" value="1"/>
</dbReference>
<dbReference type="PANTHER" id="PTHR10844:SF18">
    <property type="entry name" value="CAVEOLIN-1"/>
    <property type="match status" value="1"/>
</dbReference>
<dbReference type="Pfam" id="PF01146">
    <property type="entry name" value="Caveolin"/>
    <property type="match status" value="1"/>
</dbReference>
<dbReference type="PROSITE" id="PS01210">
    <property type="entry name" value="CAVEOLIN"/>
    <property type="match status" value="1"/>
</dbReference>
<gene>
    <name type="primary">CAV1</name>
</gene>
<evidence type="ECO:0000250" key="1"/>
<evidence type="ECO:0000250" key="2">
    <source>
        <dbReference type="UniProtKB" id="P41350"/>
    </source>
</evidence>
<evidence type="ECO:0000250" key="3">
    <source>
        <dbReference type="UniProtKB" id="P49817"/>
    </source>
</evidence>
<evidence type="ECO:0000250" key="4">
    <source>
        <dbReference type="UniProtKB" id="Q03135"/>
    </source>
</evidence>
<evidence type="ECO:0000250" key="5">
    <source>
        <dbReference type="UniProtKB" id="Q2IBA5"/>
    </source>
</evidence>
<evidence type="ECO:0000255" key="6"/>
<evidence type="ECO:0000305" key="7"/>